<sequence length="505" mass="55838">MESGPAVCCQDPRAELVDRVAAINVAHLEEADEGPEPARNGVDPPPRARAASVIPGSASRPTPVRPSLSARKFSLQERPAGSCLGAQVGPYSTGPASHISPRSWRRPTIESHRVAISDTEDCVQLNQYKLQSEIGKGAYGVVRLAYNESEDRHYAMKVLSKKKLLKQYGFPRRPPPRGSQATQGGPAKQLLPLERVYQEIAILKKLDHVNVVKLIEVLDDPAEDNLYLVFDLLRKGPVMEVPCDKPFPEEQARLYLRDIILGLEYLHCQKIVHRDIKPSNLLLGDDGHVKIADFGVSNQFEGNDAQLSSTAGTPAFMAPEAISDSGQSFSGKALDVWATGVTLYCFVYGKCPFIDDYILTLHRKIKNEAVVFPEEPEVSEDLKDLILRMLDKNPETRIGVSDIKLHPWVTKHGEEPLPSEEEHCSVVEVTEEEVKNSVRLIPSWTTVILVKSMLRKRSFGNPFEPQARREERSMSAPGSLLMKEGCGEGCKSPELPGVQEDEAAS</sequence>
<organism>
    <name type="scientific">Mus musculus</name>
    <name type="common">Mouse</name>
    <dbReference type="NCBI Taxonomy" id="10090"/>
    <lineage>
        <taxon>Eukaryota</taxon>
        <taxon>Metazoa</taxon>
        <taxon>Chordata</taxon>
        <taxon>Craniata</taxon>
        <taxon>Vertebrata</taxon>
        <taxon>Euteleostomi</taxon>
        <taxon>Mammalia</taxon>
        <taxon>Eutheria</taxon>
        <taxon>Euarchontoglires</taxon>
        <taxon>Glires</taxon>
        <taxon>Rodentia</taxon>
        <taxon>Myomorpha</taxon>
        <taxon>Muroidea</taxon>
        <taxon>Muridae</taxon>
        <taxon>Murinae</taxon>
        <taxon>Mus</taxon>
        <taxon>Mus</taxon>
    </lineage>
</organism>
<name>KKCC1_MOUSE</name>
<accession>Q8VBY2</accession>
<accession>Q9R054</accession>
<evidence type="ECO:0000250" key="1"/>
<evidence type="ECO:0000250" key="2">
    <source>
        <dbReference type="UniProtKB" id="P97756"/>
    </source>
</evidence>
<evidence type="ECO:0000250" key="3">
    <source>
        <dbReference type="UniProtKB" id="Q8N5S9"/>
    </source>
</evidence>
<evidence type="ECO:0000255" key="4">
    <source>
        <dbReference type="PROSITE-ProRule" id="PRU00159"/>
    </source>
</evidence>
<evidence type="ECO:0000255" key="5">
    <source>
        <dbReference type="PROSITE-ProRule" id="PRU10027"/>
    </source>
</evidence>
<evidence type="ECO:0000256" key="6">
    <source>
        <dbReference type="SAM" id="MobiDB-lite"/>
    </source>
</evidence>
<evidence type="ECO:0000269" key="7">
    <source>
    </source>
</evidence>
<evidence type="ECO:0000269" key="8">
    <source>
    </source>
</evidence>
<evidence type="ECO:0000305" key="9"/>
<evidence type="ECO:0007744" key="10">
    <source>
    </source>
</evidence>
<evidence type="ECO:0007744" key="11">
    <source>
    </source>
</evidence>
<comment type="function">
    <text evidence="7">Calcium/calmodulin-dependent protein kinase that belongs to a proposed calcium-triggered signaling cascade involved in a number of cellular processes. Phosphorylates CAMK1, CAMK1D, CAMK1G and CAMK4. Involved in regulating cell apoptosis. Promotes cell survival by phosphorylating AKT1/PKB that inhibits pro-apoptotic BAD/Bcl2-antagonist of cell death.</text>
</comment>
<comment type="catalytic activity">
    <reaction>
        <text>L-seryl-[protein] + ATP = O-phospho-L-seryl-[protein] + ADP + H(+)</text>
        <dbReference type="Rhea" id="RHEA:17989"/>
        <dbReference type="Rhea" id="RHEA-COMP:9863"/>
        <dbReference type="Rhea" id="RHEA-COMP:11604"/>
        <dbReference type="ChEBI" id="CHEBI:15378"/>
        <dbReference type="ChEBI" id="CHEBI:29999"/>
        <dbReference type="ChEBI" id="CHEBI:30616"/>
        <dbReference type="ChEBI" id="CHEBI:83421"/>
        <dbReference type="ChEBI" id="CHEBI:456216"/>
        <dbReference type="EC" id="2.7.11.17"/>
    </reaction>
</comment>
<comment type="catalytic activity">
    <reaction>
        <text>L-threonyl-[protein] + ATP = O-phospho-L-threonyl-[protein] + ADP + H(+)</text>
        <dbReference type="Rhea" id="RHEA:46608"/>
        <dbReference type="Rhea" id="RHEA-COMP:11060"/>
        <dbReference type="Rhea" id="RHEA-COMP:11605"/>
        <dbReference type="ChEBI" id="CHEBI:15378"/>
        <dbReference type="ChEBI" id="CHEBI:30013"/>
        <dbReference type="ChEBI" id="CHEBI:30616"/>
        <dbReference type="ChEBI" id="CHEBI:61977"/>
        <dbReference type="ChEBI" id="CHEBI:456216"/>
        <dbReference type="EC" id="2.7.11.17"/>
    </reaction>
</comment>
<comment type="activity regulation">
    <text evidence="1">Activated by Ca(2+)/calmodulin. Binding of calmodulin may relieve intrasteric autoinhibition. Partially inhibited upon phosphorylation by PRCAKA/PKA (By similarity). May be regulated through phosphorylation by CAMK1 and CAMK4.</text>
</comment>
<comment type="subunit">
    <text evidence="1">Interacts with CAMK4 and calmodulin.</text>
</comment>
<comment type="subcellular location">
    <subcellularLocation>
        <location evidence="1">Cytoplasm</location>
    </subcellularLocation>
    <subcellularLocation>
        <location evidence="1">Nucleus</location>
    </subcellularLocation>
</comment>
<comment type="tissue specificity">
    <text evidence="8">Widely expressed. Differentially expressed in various brain regions.</text>
</comment>
<comment type="domain">
    <text>The autoinhibitory domain overlaps with the calmodulin binding region and may be involved in intrasteric autoinhibition.</text>
</comment>
<comment type="domain">
    <text evidence="1">The RP domain (arginine/proline-rich) is involved in the recognition of CAMKI and CAMK4 as substrates.</text>
</comment>
<comment type="PTM">
    <text evidence="1">Appears to be autophosphorylated in a Ca(2+)/calmodulin-dependent manner. Phosphorylated at multiple sites by PRCAKA/PKA. Phosphorylation of Ser-458 is blocked upon binding to Ca(2+)/calmodulin. In vitro, phosphorylated by CAMK1 and CAMK4 (By similarity).</text>
</comment>
<comment type="similarity">
    <text evidence="4">Belongs to the protein kinase superfamily. Ser/Thr protein kinase family.</text>
</comment>
<keyword id="KW-0067">ATP-binding</keyword>
<keyword id="KW-0112">Calmodulin-binding</keyword>
<keyword id="KW-0963">Cytoplasm</keyword>
<keyword id="KW-0903">Direct protein sequencing</keyword>
<keyword id="KW-0418">Kinase</keyword>
<keyword id="KW-0488">Methylation</keyword>
<keyword id="KW-0547">Nucleotide-binding</keyword>
<keyword id="KW-0539">Nucleus</keyword>
<keyword id="KW-0597">Phosphoprotein</keyword>
<keyword id="KW-1185">Reference proteome</keyword>
<keyword id="KW-0723">Serine/threonine-protein kinase</keyword>
<keyword id="KW-0808">Transferase</keyword>
<dbReference type="EC" id="2.7.11.17"/>
<dbReference type="EMBL" id="AF117384">
    <property type="protein sequence ID" value="AAF08348.1"/>
    <property type="molecule type" value="mRNA"/>
</dbReference>
<dbReference type="EMBL" id="AF461706">
    <property type="protein sequence ID" value="AAL67849.1"/>
    <property type="molecule type" value="Genomic_DNA"/>
</dbReference>
<dbReference type="EMBL" id="AF461702">
    <property type="protein sequence ID" value="AAL67849.1"/>
    <property type="status" value="JOINED"/>
    <property type="molecule type" value="Genomic_DNA"/>
</dbReference>
<dbReference type="EMBL" id="AF461703">
    <property type="protein sequence ID" value="AAL67849.1"/>
    <property type="status" value="JOINED"/>
    <property type="molecule type" value="Genomic_DNA"/>
</dbReference>
<dbReference type="EMBL" id="AF461705">
    <property type="protein sequence ID" value="AAL67849.1"/>
    <property type="status" value="JOINED"/>
    <property type="molecule type" value="Genomic_DNA"/>
</dbReference>
<dbReference type="EMBL" id="AF461704">
    <property type="protein sequence ID" value="AAL67849.1"/>
    <property type="status" value="JOINED"/>
    <property type="molecule type" value="Genomic_DNA"/>
</dbReference>
<dbReference type="EMBL" id="BC017529">
    <property type="protein sequence ID" value="AAH17529.1"/>
    <property type="molecule type" value="mRNA"/>
</dbReference>
<dbReference type="CCDS" id="CCDS24993.1"/>
<dbReference type="RefSeq" id="NP_001349770.1">
    <property type="nucleotide sequence ID" value="NM_001362841.1"/>
</dbReference>
<dbReference type="RefSeq" id="NP_061371.2">
    <property type="nucleotide sequence ID" value="NM_018883.3"/>
</dbReference>
<dbReference type="RefSeq" id="XP_006533823.1">
    <property type="nucleotide sequence ID" value="XM_006533760.3"/>
</dbReference>
<dbReference type="RefSeq" id="XP_006533824.1">
    <property type="nucleotide sequence ID" value="XM_006533761.4"/>
</dbReference>
<dbReference type="SMR" id="Q8VBY2"/>
<dbReference type="BioGRID" id="207756">
    <property type="interactions" value="6"/>
</dbReference>
<dbReference type="FunCoup" id="Q8VBY2">
    <property type="interactions" value="1894"/>
</dbReference>
<dbReference type="MINT" id="Q8VBY2"/>
<dbReference type="STRING" id="10090.ENSMUSP00000090613"/>
<dbReference type="iPTMnet" id="Q8VBY2"/>
<dbReference type="PhosphoSitePlus" id="Q8VBY2"/>
<dbReference type="SwissPalm" id="Q8VBY2"/>
<dbReference type="jPOST" id="Q8VBY2"/>
<dbReference type="PaxDb" id="10090-ENSMUSP00000090613"/>
<dbReference type="PeptideAtlas" id="Q8VBY2"/>
<dbReference type="ProteomicsDB" id="264760"/>
<dbReference type="Pumba" id="Q8VBY2"/>
<dbReference type="Antibodypedia" id="3968">
    <property type="antibodies" value="216 antibodies from 33 providers"/>
</dbReference>
<dbReference type="DNASU" id="55984"/>
<dbReference type="Ensembl" id="ENSMUST00000092937.13">
    <property type="protein sequence ID" value="ENSMUSP00000090613.7"/>
    <property type="gene ID" value="ENSMUSG00000020785.18"/>
</dbReference>
<dbReference type="GeneID" id="55984"/>
<dbReference type="KEGG" id="mmu:55984"/>
<dbReference type="UCSC" id="uc007jzt.1">
    <property type="organism name" value="mouse"/>
</dbReference>
<dbReference type="AGR" id="MGI:1891766"/>
<dbReference type="CTD" id="84254"/>
<dbReference type="MGI" id="MGI:1891766">
    <property type="gene designation" value="Camkk1"/>
</dbReference>
<dbReference type="VEuPathDB" id="HostDB:ENSMUSG00000020785"/>
<dbReference type="eggNOG" id="KOG0585">
    <property type="taxonomic scope" value="Eukaryota"/>
</dbReference>
<dbReference type="GeneTree" id="ENSGT00940000154890"/>
<dbReference type="InParanoid" id="Q8VBY2"/>
<dbReference type="OMA" id="MACGPCM"/>
<dbReference type="OrthoDB" id="68483at2759"/>
<dbReference type="PhylomeDB" id="Q8VBY2"/>
<dbReference type="TreeFam" id="TF313013"/>
<dbReference type="Reactome" id="R-MMU-111932">
    <property type="pathway name" value="CaMK IV-mediated phosphorylation of CREB"/>
</dbReference>
<dbReference type="Reactome" id="R-MMU-442729">
    <property type="pathway name" value="CREB1 phosphorylation through the activation of CaMKII/CaMKK/CaMKIV cascasde"/>
</dbReference>
<dbReference type="Reactome" id="R-MMU-9619229">
    <property type="pathway name" value="Activation of RAC1 downstream of NMDARs"/>
</dbReference>
<dbReference type="BioGRID-ORCS" id="55984">
    <property type="hits" value="1 hit in 79 CRISPR screens"/>
</dbReference>
<dbReference type="PRO" id="PR:Q8VBY2"/>
<dbReference type="Proteomes" id="UP000000589">
    <property type="component" value="Chromosome 11"/>
</dbReference>
<dbReference type="RNAct" id="Q8VBY2">
    <property type="molecule type" value="protein"/>
</dbReference>
<dbReference type="Bgee" id="ENSMUSG00000020785">
    <property type="expression patterns" value="Expressed in dentate gyrus of hippocampal formation granule cell and 176 other cell types or tissues"/>
</dbReference>
<dbReference type="ExpressionAtlas" id="Q8VBY2">
    <property type="expression patterns" value="baseline and differential"/>
</dbReference>
<dbReference type="GO" id="GO:0005829">
    <property type="term" value="C:cytosol"/>
    <property type="evidence" value="ECO:0000304"/>
    <property type="project" value="Reactome"/>
</dbReference>
<dbReference type="GO" id="GO:0005654">
    <property type="term" value="C:nucleoplasm"/>
    <property type="evidence" value="ECO:0000304"/>
    <property type="project" value="Reactome"/>
</dbReference>
<dbReference type="GO" id="GO:0005524">
    <property type="term" value="F:ATP binding"/>
    <property type="evidence" value="ECO:0007669"/>
    <property type="project" value="UniProtKB-KW"/>
</dbReference>
<dbReference type="GO" id="GO:0004683">
    <property type="term" value="F:calcium/calmodulin-dependent protein kinase activity"/>
    <property type="evidence" value="ECO:0000250"/>
    <property type="project" value="MGI"/>
</dbReference>
<dbReference type="GO" id="GO:0005516">
    <property type="term" value="F:calmodulin binding"/>
    <property type="evidence" value="ECO:0007669"/>
    <property type="project" value="UniProtKB-KW"/>
</dbReference>
<dbReference type="GO" id="GO:0106310">
    <property type="term" value="F:protein serine kinase activity"/>
    <property type="evidence" value="ECO:0007669"/>
    <property type="project" value="RHEA"/>
</dbReference>
<dbReference type="CDD" id="cd14200">
    <property type="entry name" value="STKc_CaMKK1"/>
    <property type="match status" value="1"/>
</dbReference>
<dbReference type="FunFam" id="3.30.200.20:FF:000429">
    <property type="entry name" value="Calcium/calmodulin-dependent protein kinase kinase"/>
    <property type="match status" value="1"/>
</dbReference>
<dbReference type="FunFam" id="1.10.510.10:FF:000091">
    <property type="entry name" value="Calcium/calmodulin-dependent protein kinase kinase 2 isoform 1"/>
    <property type="match status" value="1"/>
</dbReference>
<dbReference type="Gene3D" id="3.30.200.20">
    <property type="entry name" value="Phosphorylase Kinase, domain 1"/>
    <property type="match status" value="1"/>
</dbReference>
<dbReference type="Gene3D" id="1.10.510.10">
    <property type="entry name" value="Transferase(Phosphotransferase) domain 1"/>
    <property type="match status" value="1"/>
</dbReference>
<dbReference type="InterPro" id="IPR011009">
    <property type="entry name" value="Kinase-like_dom_sf"/>
</dbReference>
<dbReference type="InterPro" id="IPR000719">
    <property type="entry name" value="Prot_kinase_dom"/>
</dbReference>
<dbReference type="InterPro" id="IPR017441">
    <property type="entry name" value="Protein_kinase_ATP_BS"/>
</dbReference>
<dbReference type="InterPro" id="IPR008271">
    <property type="entry name" value="Ser/Thr_kinase_AS"/>
</dbReference>
<dbReference type="PANTHER" id="PTHR43895">
    <property type="entry name" value="CALCIUM/CALMODULIN-DEPENDENT PROTEIN KINASE KINASE-RELATED"/>
    <property type="match status" value="1"/>
</dbReference>
<dbReference type="PANTHER" id="PTHR43895:SF26">
    <property type="entry name" value="CALCIUM_CALMODULIN DEPENDENT PROTEIN KINASE KINASE 1"/>
    <property type="match status" value="1"/>
</dbReference>
<dbReference type="Pfam" id="PF00069">
    <property type="entry name" value="Pkinase"/>
    <property type="match status" value="1"/>
</dbReference>
<dbReference type="SMART" id="SM00220">
    <property type="entry name" value="S_TKc"/>
    <property type="match status" value="1"/>
</dbReference>
<dbReference type="SUPFAM" id="SSF56112">
    <property type="entry name" value="Protein kinase-like (PK-like)"/>
    <property type="match status" value="1"/>
</dbReference>
<dbReference type="PROSITE" id="PS00107">
    <property type="entry name" value="PROTEIN_KINASE_ATP"/>
    <property type="match status" value="1"/>
</dbReference>
<dbReference type="PROSITE" id="PS50011">
    <property type="entry name" value="PROTEIN_KINASE_DOM"/>
    <property type="match status" value="1"/>
</dbReference>
<dbReference type="PROSITE" id="PS00108">
    <property type="entry name" value="PROTEIN_KINASE_ST"/>
    <property type="match status" value="1"/>
</dbReference>
<protein>
    <recommendedName>
        <fullName>Calcium/calmodulin-dependent protein kinase kinase 1</fullName>
        <shortName>CaM-KK 1</shortName>
        <shortName>CaM-kinase kinase 1</shortName>
        <shortName>CaMKK 1</shortName>
        <ecNumber>2.7.11.17</ecNumber>
    </recommendedName>
    <alternativeName>
        <fullName>CaM-kinase IV kinase</fullName>
    </alternativeName>
    <alternativeName>
        <fullName>Calcium/calmodulin-dependent protein kinase kinase alpha</fullName>
        <shortName>CaM-KK alpha</shortName>
        <shortName>CaM-kinase kinase alpha</shortName>
        <shortName>CaMKK alpha</shortName>
    </alternativeName>
</protein>
<reference key="1">
    <citation type="journal article" date="1999" name="Exp. Hematol.">
        <title>Modulation of a calcium/calmodulin-dependent protein kinase cascade by retinoic acid during neutrophil maturation.</title>
        <authorList>
            <person name="Lawson N.D."/>
            <person name="Zain M."/>
            <person name="Zibello T."/>
            <person name="Picciotto M.R."/>
            <person name="Nairn A.C."/>
            <person name="Berliner N."/>
        </authorList>
    </citation>
    <scope>NUCLEOTIDE SEQUENCE [MRNA]</scope>
</reference>
<reference key="2">
    <citation type="journal article" date="2006" name="Mol. Cell. Biol.">
        <title>Long-term memory deficits in Pavlovian fear conditioning in Ca2+/calmodulin kinase kinase alpha-deficient mice.</title>
        <authorList>
            <person name="Blaeser F."/>
            <person name="Sanders M.J."/>
            <person name="Truong N."/>
            <person name="Ko S."/>
            <person name="Wu L.J."/>
            <person name="Wozniak D.F."/>
            <person name="Fanselow M.S."/>
            <person name="Zhuo M."/>
            <person name="Chatila T.A."/>
        </authorList>
    </citation>
    <scope>NUCLEOTIDE SEQUENCE [GENOMIC DNA]</scope>
    <source>
        <strain>129/SvJ</strain>
    </source>
</reference>
<reference key="3">
    <citation type="journal article" date="2004" name="Genome Res.">
        <title>The status, quality, and expansion of the NIH full-length cDNA project: the Mammalian Gene Collection (MGC).</title>
        <authorList>
            <consortium name="The MGC Project Team"/>
        </authorList>
    </citation>
    <scope>NUCLEOTIDE SEQUENCE [LARGE SCALE MRNA]</scope>
    <source>
        <strain>FVB/N</strain>
        <tissue>Salivary gland</tissue>
    </source>
</reference>
<reference key="4">
    <citation type="submission" date="2009-01" db="UniProtKB">
        <authorList>
            <person name="Lubec G."/>
            <person name="Sunyer B."/>
            <person name="Chen W.-Q."/>
        </authorList>
    </citation>
    <scope>PROTEIN SEQUENCE OF 114-129 AND 440-451</scope>
    <scope>IDENTIFICATION BY MASS SPECTROMETRY</scope>
    <source>
        <strain>OF1</strain>
        <tissue>Hippocampus</tissue>
    </source>
</reference>
<reference key="5">
    <citation type="journal article" date="2003" name="Brain Res. Mol. Brain Res.">
        <title>Cloning of mouse Ca2+/calmodulin-dependent protein kinase kinase beta (CaMKKbeta) and characterization of CaMKKbeta and CaMKKalpha distribution in the adult mouse brain.</title>
        <authorList>
            <person name="Vinet J."/>
            <person name="Carra S."/>
            <person name="Blom J.M.C."/>
            <person name="Harvey M."/>
            <person name="Brunello N."/>
            <person name="Barden N."/>
            <person name="Tascedda F."/>
        </authorList>
    </citation>
    <scope>TISSUE SPECIFICITY</scope>
</reference>
<reference key="6">
    <citation type="journal article" date="2003" name="J. Biol. Chem.">
        <title>Molecular cloning and characterization of CLICK-III/CaMKIgamma, a novel membrane-anchored neuronal Ca2+/calmodulin-dependent protein kinase (CaMK).</title>
        <authorList>
            <person name="Takemoto-Kimura S."/>
            <person name="Terai H."/>
            <person name="Takamoto M."/>
            <person name="Ohmae S."/>
            <person name="Kikumura S."/>
            <person name="Segi E."/>
            <person name="Arakawa Y."/>
            <person name="Furuyashiki T."/>
            <person name="Narumiya S."/>
            <person name="Bito H."/>
        </authorList>
    </citation>
    <scope>FUNCTION IN PHOSPHORYLATION OF CAMK1G</scope>
</reference>
<reference key="7">
    <citation type="journal article" date="2007" name="Mol. Cell. Proteomics">
        <title>Qualitative and quantitative analyses of protein phosphorylation in naive and stimulated mouse synaptosomal preparations.</title>
        <authorList>
            <person name="Munton R.P."/>
            <person name="Tweedie-Cullen R."/>
            <person name="Livingstone-Zatchej M."/>
            <person name="Weinandy F."/>
            <person name="Waidelich M."/>
            <person name="Longo D."/>
            <person name="Gehrig P."/>
            <person name="Potthast F."/>
            <person name="Rutishauser D."/>
            <person name="Gerrits B."/>
            <person name="Panse C."/>
            <person name="Schlapbach R."/>
            <person name="Mansuy I.M."/>
        </authorList>
    </citation>
    <scope>IDENTIFICATION BY MASS SPECTROMETRY [LARGE SCALE ANALYSIS]</scope>
    <source>
        <tissue>Brain cortex</tissue>
    </source>
</reference>
<reference key="8">
    <citation type="journal article" date="2010" name="Cell">
        <title>A tissue-specific atlas of mouse protein phosphorylation and expression.</title>
        <authorList>
            <person name="Huttlin E.L."/>
            <person name="Jedrychowski M.P."/>
            <person name="Elias J.E."/>
            <person name="Goswami T."/>
            <person name="Rad R."/>
            <person name="Beausoleil S.A."/>
            <person name="Villen J."/>
            <person name="Haas W."/>
            <person name="Sowa M.E."/>
            <person name="Gygi S.P."/>
        </authorList>
    </citation>
    <scope>PHOSPHORYLATION [LARGE SCALE ANALYSIS] AT SER-74; SER-100; SER-458 AND SER-492</scope>
    <scope>IDENTIFICATION BY MASS SPECTROMETRY [LARGE SCALE ANALYSIS]</scope>
    <source>
        <tissue>Brain</tissue>
        <tissue>Lung</tissue>
    </source>
</reference>
<reference key="9">
    <citation type="journal article" date="2014" name="Mol. Cell. Proteomics">
        <title>Immunoaffinity enrichment and mass spectrometry analysis of protein methylation.</title>
        <authorList>
            <person name="Guo A."/>
            <person name="Gu H."/>
            <person name="Zhou J."/>
            <person name="Mulhern D."/>
            <person name="Wang Y."/>
            <person name="Lee K.A."/>
            <person name="Yang V."/>
            <person name="Aguiar M."/>
            <person name="Kornhauser J."/>
            <person name="Jia X."/>
            <person name="Ren J."/>
            <person name="Beausoleil S.A."/>
            <person name="Silva J.C."/>
            <person name="Vemulapalli V."/>
            <person name="Bedford M.T."/>
            <person name="Comb M.J."/>
        </authorList>
    </citation>
    <scope>METHYLATION [LARGE SCALE ANALYSIS] AT ARG-78</scope>
    <scope>IDENTIFICATION BY MASS SPECTROMETRY [LARGE SCALE ANALYSIS]</scope>
    <source>
        <tissue>Brain</tissue>
    </source>
</reference>
<proteinExistence type="evidence at protein level"/>
<gene>
    <name type="primary">Camkk1</name>
    <name type="synonym">Camkk</name>
</gene>
<feature type="chain" id="PRO_0000086142" description="Calcium/calmodulin-dependent protein kinase kinase 1">
    <location>
        <begin position="1"/>
        <end position="505"/>
    </location>
</feature>
<feature type="domain" description="Protein kinase" evidence="4">
    <location>
        <begin position="128"/>
        <end position="409"/>
    </location>
</feature>
<feature type="region of interest" description="Disordered" evidence="6">
    <location>
        <begin position="28"/>
        <end position="66"/>
    </location>
</feature>
<feature type="region of interest" description="Disordered" evidence="6">
    <location>
        <begin position="84"/>
        <end position="105"/>
    </location>
</feature>
<feature type="region of interest" description="RP domain">
    <location>
        <begin position="167"/>
        <end position="189"/>
    </location>
</feature>
<feature type="region of interest" description="Autoinhibitory domain" evidence="1">
    <location>
        <begin position="435"/>
        <end position="440"/>
    </location>
</feature>
<feature type="region of interest" description="Calmodulin-binding" evidence="1">
    <location>
        <begin position="438"/>
        <end position="463"/>
    </location>
</feature>
<feature type="region of interest" description="Disordered" evidence="6">
    <location>
        <begin position="460"/>
        <end position="505"/>
    </location>
</feature>
<feature type="active site" description="Proton acceptor" evidence="4 5">
    <location>
        <position position="275"/>
    </location>
</feature>
<feature type="binding site" evidence="4">
    <location>
        <begin position="134"/>
        <end position="142"/>
    </location>
    <ligand>
        <name>ATP</name>
        <dbReference type="ChEBI" id="CHEBI:30616"/>
    </ligand>
</feature>
<feature type="binding site" evidence="4">
    <location>
        <position position="157"/>
    </location>
    <ligand>
        <name>ATP</name>
        <dbReference type="ChEBI" id="CHEBI:30616"/>
    </ligand>
</feature>
<feature type="modified residue" description="Phosphoserine" evidence="3">
    <location>
        <position position="67"/>
    </location>
</feature>
<feature type="modified residue" description="Phosphoserine" evidence="10">
    <location>
        <position position="74"/>
    </location>
</feature>
<feature type="modified residue" description="Asymmetric dimethylarginine" evidence="11">
    <location>
        <position position="78"/>
    </location>
</feature>
<feature type="modified residue" description="Phosphoserine" evidence="10">
    <location>
        <position position="100"/>
    </location>
</feature>
<feature type="modified residue" description="Phosphothreonine" evidence="2">
    <location>
        <position position="108"/>
    </location>
</feature>
<feature type="modified residue" description="Phosphoserine" evidence="10">
    <location>
        <position position="458"/>
    </location>
</feature>
<feature type="modified residue" description="Phosphoserine" evidence="2">
    <location>
        <position position="475"/>
    </location>
</feature>
<feature type="modified residue" description="Phosphoserine" evidence="10">
    <location>
        <position position="492"/>
    </location>
</feature>
<feature type="sequence conflict" description="In Ref. 1; AAF08348." evidence="9" ref="1">
    <original>IS</original>
    <variation>MC</variation>
    <location>
        <begin position="99"/>
        <end position="100"/>
    </location>
</feature>
<feature type="sequence conflict" description="In Ref. 1; AAF08348." evidence="9" ref="1">
    <original>QE</original>
    <variation>HD</variation>
    <location>
        <begin position="198"/>
        <end position="199"/>
    </location>
</feature>
<feature type="sequence conflict" description="In Ref. 1; AAF08348." evidence="9" ref="1">
    <original>L</original>
    <variation>S</variation>
    <location>
        <position position="382"/>
    </location>
</feature>
<feature type="sequence conflict" description="In Ref. 1; AAF08348." evidence="9" ref="1">
    <original>L</original>
    <variation>I</variation>
    <location>
        <position position="417"/>
    </location>
</feature>